<protein>
    <recommendedName>
        <fullName>TATA box-binding protein-like 1</fullName>
        <shortName>TBP-like 1</shortName>
    </recommendedName>
    <alternativeName>
        <fullName>21 kDa TBP-like protein</fullName>
    </alternativeName>
    <alternativeName>
        <fullName>TATA box-binding protein-related factor 2</fullName>
        <shortName>TBP-related factor 2</shortName>
    </alternativeName>
    <alternativeName>
        <fullName>TBP-like factor</fullName>
    </alternativeName>
    <alternativeName>
        <fullName>TBP-related protein</fullName>
    </alternativeName>
</protein>
<feature type="chain" id="PRO_0000153993" description="TATA box-binding protein-like 1">
    <location>
        <begin position="1"/>
        <end position="186"/>
    </location>
</feature>
<reference key="1">
    <citation type="journal article" date="1999" name="Nucleic Acids Res.">
        <title>Identification of a mouse TBP-like protein (TLP) distantly related to the Drosophila TBP-related factor.</title>
        <authorList>
            <person name="Ohbayashi T."/>
            <person name="Makino Y."/>
            <person name="Tamura T."/>
        </authorList>
    </citation>
    <scope>NUCLEOTIDE SEQUENCE [MRNA]</scope>
    <scope>FUNCTION</scope>
    <scope>TISSUE SPECIFICITY</scope>
    <source>
        <tissue>Brain</tissue>
    </source>
</reference>
<reference key="2">
    <citation type="journal article" date="2005" name="Science">
        <title>The transcriptional landscape of the mammalian genome.</title>
        <authorList>
            <person name="Carninci P."/>
            <person name="Kasukawa T."/>
            <person name="Katayama S."/>
            <person name="Gough J."/>
            <person name="Frith M.C."/>
            <person name="Maeda N."/>
            <person name="Oyama R."/>
            <person name="Ravasi T."/>
            <person name="Lenhard B."/>
            <person name="Wells C."/>
            <person name="Kodzius R."/>
            <person name="Shimokawa K."/>
            <person name="Bajic V.B."/>
            <person name="Brenner S.E."/>
            <person name="Batalov S."/>
            <person name="Forrest A.R."/>
            <person name="Zavolan M."/>
            <person name="Davis M.J."/>
            <person name="Wilming L.G."/>
            <person name="Aidinis V."/>
            <person name="Allen J.E."/>
            <person name="Ambesi-Impiombato A."/>
            <person name="Apweiler R."/>
            <person name="Aturaliya R.N."/>
            <person name="Bailey T.L."/>
            <person name="Bansal M."/>
            <person name="Baxter L."/>
            <person name="Beisel K.W."/>
            <person name="Bersano T."/>
            <person name="Bono H."/>
            <person name="Chalk A.M."/>
            <person name="Chiu K.P."/>
            <person name="Choudhary V."/>
            <person name="Christoffels A."/>
            <person name="Clutterbuck D.R."/>
            <person name="Crowe M.L."/>
            <person name="Dalla E."/>
            <person name="Dalrymple B.P."/>
            <person name="de Bono B."/>
            <person name="Della Gatta G."/>
            <person name="di Bernardo D."/>
            <person name="Down T."/>
            <person name="Engstrom P."/>
            <person name="Fagiolini M."/>
            <person name="Faulkner G."/>
            <person name="Fletcher C.F."/>
            <person name="Fukushima T."/>
            <person name="Furuno M."/>
            <person name="Futaki S."/>
            <person name="Gariboldi M."/>
            <person name="Georgii-Hemming P."/>
            <person name="Gingeras T.R."/>
            <person name="Gojobori T."/>
            <person name="Green R.E."/>
            <person name="Gustincich S."/>
            <person name="Harbers M."/>
            <person name="Hayashi Y."/>
            <person name="Hensch T.K."/>
            <person name="Hirokawa N."/>
            <person name="Hill D."/>
            <person name="Huminiecki L."/>
            <person name="Iacono M."/>
            <person name="Ikeo K."/>
            <person name="Iwama A."/>
            <person name="Ishikawa T."/>
            <person name="Jakt M."/>
            <person name="Kanapin A."/>
            <person name="Katoh M."/>
            <person name="Kawasawa Y."/>
            <person name="Kelso J."/>
            <person name="Kitamura H."/>
            <person name="Kitano H."/>
            <person name="Kollias G."/>
            <person name="Krishnan S.P."/>
            <person name="Kruger A."/>
            <person name="Kummerfeld S.K."/>
            <person name="Kurochkin I.V."/>
            <person name="Lareau L.F."/>
            <person name="Lazarevic D."/>
            <person name="Lipovich L."/>
            <person name="Liu J."/>
            <person name="Liuni S."/>
            <person name="McWilliam S."/>
            <person name="Madan Babu M."/>
            <person name="Madera M."/>
            <person name="Marchionni L."/>
            <person name="Matsuda H."/>
            <person name="Matsuzawa S."/>
            <person name="Miki H."/>
            <person name="Mignone F."/>
            <person name="Miyake S."/>
            <person name="Morris K."/>
            <person name="Mottagui-Tabar S."/>
            <person name="Mulder N."/>
            <person name="Nakano N."/>
            <person name="Nakauchi H."/>
            <person name="Ng P."/>
            <person name="Nilsson R."/>
            <person name="Nishiguchi S."/>
            <person name="Nishikawa S."/>
            <person name="Nori F."/>
            <person name="Ohara O."/>
            <person name="Okazaki Y."/>
            <person name="Orlando V."/>
            <person name="Pang K.C."/>
            <person name="Pavan W.J."/>
            <person name="Pavesi G."/>
            <person name="Pesole G."/>
            <person name="Petrovsky N."/>
            <person name="Piazza S."/>
            <person name="Reed J."/>
            <person name="Reid J.F."/>
            <person name="Ring B.Z."/>
            <person name="Ringwald M."/>
            <person name="Rost B."/>
            <person name="Ruan Y."/>
            <person name="Salzberg S.L."/>
            <person name="Sandelin A."/>
            <person name="Schneider C."/>
            <person name="Schoenbach C."/>
            <person name="Sekiguchi K."/>
            <person name="Semple C.A."/>
            <person name="Seno S."/>
            <person name="Sessa L."/>
            <person name="Sheng Y."/>
            <person name="Shibata Y."/>
            <person name="Shimada H."/>
            <person name="Shimada K."/>
            <person name="Silva D."/>
            <person name="Sinclair B."/>
            <person name="Sperling S."/>
            <person name="Stupka E."/>
            <person name="Sugiura K."/>
            <person name="Sultana R."/>
            <person name="Takenaka Y."/>
            <person name="Taki K."/>
            <person name="Tammoja K."/>
            <person name="Tan S.L."/>
            <person name="Tang S."/>
            <person name="Taylor M.S."/>
            <person name="Tegner J."/>
            <person name="Teichmann S.A."/>
            <person name="Ueda H.R."/>
            <person name="van Nimwegen E."/>
            <person name="Verardo R."/>
            <person name="Wei C.L."/>
            <person name="Yagi K."/>
            <person name="Yamanishi H."/>
            <person name="Zabarovsky E."/>
            <person name="Zhu S."/>
            <person name="Zimmer A."/>
            <person name="Hide W."/>
            <person name="Bult C."/>
            <person name="Grimmond S.M."/>
            <person name="Teasdale R.D."/>
            <person name="Liu E.T."/>
            <person name="Brusic V."/>
            <person name="Quackenbush J."/>
            <person name="Wahlestedt C."/>
            <person name="Mattick J.S."/>
            <person name="Hume D.A."/>
            <person name="Kai C."/>
            <person name="Sasaki D."/>
            <person name="Tomaru Y."/>
            <person name="Fukuda S."/>
            <person name="Kanamori-Katayama M."/>
            <person name="Suzuki M."/>
            <person name="Aoki J."/>
            <person name="Arakawa T."/>
            <person name="Iida J."/>
            <person name="Imamura K."/>
            <person name="Itoh M."/>
            <person name="Kato T."/>
            <person name="Kawaji H."/>
            <person name="Kawagashira N."/>
            <person name="Kawashima T."/>
            <person name="Kojima M."/>
            <person name="Kondo S."/>
            <person name="Konno H."/>
            <person name="Nakano K."/>
            <person name="Ninomiya N."/>
            <person name="Nishio T."/>
            <person name="Okada M."/>
            <person name="Plessy C."/>
            <person name="Shibata K."/>
            <person name="Shiraki T."/>
            <person name="Suzuki S."/>
            <person name="Tagami M."/>
            <person name="Waki K."/>
            <person name="Watahiki A."/>
            <person name="Okamura-Oho Y."/>
            <person name="Suzuki H."/>
            <person name="Kawai J."/>
            <person name="Hayashizaki Y."/>
        </authorList>
    </citation>
    <scope>NUCLEOTIDE SEQUENCE [LARGE SCALE MRNA]</scope>
    <source>
        <strain>C57BL/6J</strain>
        <tissue>Hippocampus</tissue>
    </source>
</reference>
<reference key="3">
    <citation type="journal article" date="2005" name="Mol. Cell. Biol.">
        <title>TATA-binding protein (TBP)-like factor (TLF) is a functional regulator of transcription: reciprocal regulation of the neurofibromatosis type 1 and c-fos genes by TLF/TRF2 and TBP.</title>
        <authorList>
            <person name="Chong J.A."/>
            <person name="Moran M.M."/>
            <person name="Teichmann M."/>
            <person name="Kaczmarek J.S."/>
            <person name="Roeder R."/>
            <person name="Clapham D.E."/>
        </authorList>
    </citation>
    <scope>FUNCTION</scope>
    <scope>DISRUPTION PHENOTYPE</scope>
</reference>
<reference key="4">
    <citation type="journal article" date="2006" name="Gene Expr. Patterns">
        <title>Developmental and cell type-specific regulation of core promoter transcription factors in germ cells of frogs and mice.</title>
        <authorList>
            <person name="Xiao L."/>
            <person name="Kim M."/>
            <person name="DeJong J."/>
        </authorList>
    </citation>
    <scope>TISSUE SPECIFICITY</scope>
</reference>
<reference key="5">
    <citation type="journal article" date="2010" name="Cell">
        <title>A tissue-specific atlas of mouse protein phosphorylation and expression.</title>
        <authorList>
            <person name="Huttlin E.L."/>
            <person name="Jedrychowski M.P."/>
            <person name="Elias J.E."/>
            <person name="Goswami T."/>
            <person name="Rad R."/>
            <person name="Beausoleil S.A."/>
            <person name="Villen J."/>
            <person name="Haas W."/>
            <person name="Sowa M.E."/>
            <person name="Gygi S.P."/>
        </authorList>
    </citation>
    <scope>IDENTIFICATION BY MASS SPECTROMETRY [LARGE SCALE ANALYSIS]</scope>
    <source>
        <tissue>Brain</tissue>
        <tissue>Kidney</tissue>
        <tissue>Lung</tissue>
        <tissue>Spleen</tissue>
        <tissue>Testis</tissue>
    </source>
</reference>
<sequence length="186" mass="20887">MDADSDVALDILITNVVCVFRTRCHLNLRKIALEGANVIYKRDVGKVLMKLRKPRITATIWSSGKIICTGATSEEEAKFGARRLARSLQKLGFQVIFTDFKVVNVLAVCNMPFEIRLPEFTKNNRPHASYEPELHPAVCYRIKSLRATLQIFSTGSITVTGPNVKAVATAVEQIYPFVFESRKEIL</sequence>
<organism>
    <name type="scientific">Mus musculus</name>
    <name type="common">Mouse</name>
    <dbReference type="NCBI Taxonomy" id="10090"/>
    <lineage>
        <taxon>Eukaryota</taxon>
        <taxon>Metazoa</taxon>
        <taxon>Chordata</taxon>
        <taxon>Craniata</taxon>
        <taxon>Vertebrata</taxon>
        <taxon>Euteleostomi</taxon>
        <taxon>Mammalia</taxon>
        <taxon>Eutheria</taxon>
        <taxon>Euarchontoglires</taxon>
        <taxon>Glires</taxon>
        <taxon>Rodentia</taxon>
        <taxon>Myomorpha</taxon>
        <taxon>Muroidea</taxon>
        <taxon>Muridae</taxon>
        <taxon>Murinae</taxon>
        <taxon>Mus</taxon>
        <taxon>Mus</taxon>
    </lineage>
</organism>
<proteinExistence type="evidence at protein level"/>
<dbReference type="EMBL" id="AB017697">
    <property type="protein sequence ID" value="BAA74578.1"/>
    <property type="molecule type" value="mRNA"/>
</dbReference>
<dbReference type="EMBL" id="AK049975">
    <property type="protein sequence ID" value="BAC34014.1"/>
    <property type="molecule type" value="mRNA"/>
</dbReference>
<dbReference type="EMBL" id="AK078547">
    <property type="protein sequence ID" value="BAC37330.1"/>
    <property type="molecule type" value="mRNA"/>
</dbReference>
<dbReference type="CCDS" id="CCDS23730.1"/>
<dbReference type="RefSeq" id="NP_001408533.1">
    <property type="nucleotide sequence ID" value="NM_001421604.1"/>
</dbReference>
<dbReference type="RefSeq" id="NP_001408534.1">
    <property type="nucleotide sequence ID" value="NM_001421605.1"/>
</dbReference>
<dbReference type="RefSeq" id="NP_035733.1">
    <property type="nucleotide sequence ID" value="NM_011603.6"/>
</dbReference>
<dbReference type="RefSeq" id="XP_006512793.1">
    <property type="nucleotide sequence ID" value="XM_006512730.3"/>
</dbReference>
<dbReference type="SMR" id="P62340"/>
<dbReference type="BioGRID" id="231864">
    <property type="interactions" value="7"/>
</dbReference>
<dbReference type="FunCoup" id="P62340">
    <property type="interactions" value="3174"/>
</dbReference>
<dbReference type="IntAct" id="P62340">
    <property type="interactions" value="2"/>
</dbReference>
<dbReference type="MINT" id="P62340"/>
<dbReference type="STRING" id="10090.ENSMUSP00000114223"/>
<dbReference type="PhosphoSitePlus" id="P62340"/>
<dbReference type="SwissPalm" id="P62340"/>
<dbReference type="PaxDb" id="10090-ENSMUSP00000114223"/>
<dbReference type="PeptideAtlas" id="P62340"/>
<dbReference type="ProteomicsDB" id="262953"/>
<dbReference type="Pumba" id="P62340"/>
<dbReference type="Antibodypedia" id="19728">
    <property type="antibodies" value="176 antibodies from 30 providers"/>
</dbReference>
<dbReference type="DNASU" id="237336"/>
<dbReference type="Ensembl" id="ENSMUST00000095794.4">
    <property type="protein sequence ID" value="ENSMUSP00000093470.4"/>
    <property type="gene ID" value="ENSMUSG00000071359.14"/>
</dbReference>
<dbReference type="Ensembl" id="ENSMUST00000127698.8">
    <property type="protein sequence ID" value="ENSMUSP00000114223.2"/>
    <property type="gene ID" value="ENSMUSG00000071359.14"/>
</dbReference>
<dbReference type="GeneID" id="237336"/>
<dbReference type="KEGG" id="mmu:237336"/>
<dbReference type="UCSC" id="uc007epp.2">
    <property type="organism name" value="mouse"/>
</dbReference>
<dbReference type="AGR" id="MGI:1339946"/>
<dbReference type="CTD" id="9519"/>
<dbReference type="MGI" id="MGI:1339946">
    <property type="gene designation" value="Tbpl1"/>
</dbReference>
<dbReference type="VEuPathDB" id="HostDB:ENSMUSG00000071359"/>
<dbReference type="eggNOG" id="KOG3302">
    <property type="taxonomic scope" value="Eukaryota"/>
</dbReference>
<dbReference type="GeneTree" id="ENSGT00940000155712"/>
<dbReference type="HOGENOM" id="CLU_060161_4_1_1"/>
<dbReference type="InParanoid" id="P62340"/>
<dbReference type="OMA" id="NCEYEPE"/>
<dbReference type="OrthoDB" id="2127950at2759"/>
<dbReference type="PhylomeDB" id="P62340"/>
<dbReference type="TreeFam" id="TF300102"/>
<dbReference type="BioGRID-ORCS" id="237336">
    <property type="hits" value="8 hits in 81 CRISPR screens"/>
</dbReference>
<dbReference type="ChiTaRS" id="Tbpl1">
    <property type="organism name" value="mouse"/>
</dbReference>
<dbReference type="PRO" id="PR:P62340"/>
<dbReference type="Proteomes" id="UP000000589">
    <property type="component" value="Chromosome 10"/>
</dbReference>
<dbReference type="RNAct" id="P62340">
    <property type="molecule type" value="protein"/>
</dbReference>
<dbReference type="Bgee" id="ENSMUSG00000071359">
    <property type="expression patterns" value="Expressed in spermatid and 272 other cell types or tissues"/>
</dbReference>
<dbReference type="GO" id="GO:0005737">
    <property type="term" value="C:cytoplasm"/>
    <property type="evidence" value="ECO:0000314"/>
    <property type="project" value="MGI"/>
</dbReference>
<dbReference type="GO" id="GO:0001673">
    <property type="term" value="C:male germ cell nucleus"/>
    <property type="evidence" value="ECO:0000314"/>
    <property type="project" value="MGI"/>
</dbReference>
<dbReference type="GO" id="GO:0005634">
    <property type="term" value="C:nucleus"/>
    <property type="evidence" value="ECO:0000314"/>
    <property type="project" value="MGI"/>
</dbReference>
<dbReference type="GO" id="GO:0005672">
    <property type="term" value="C:transcription factor TFIIA complex"/>
    <property type="evidence" value="ECO:0000314"/>
    <property type="project" value="MGI"/>
</dbReference>
<dbReference type="GO" id="GO:0000979">
    <property type="term" value="F:RNA polymerase II core promoter sequence-specific DNA binding"/>
    <property type="evidence" value="ECO:0007669"/>
    <property type="project" value="Ensembl"/>
</dbReference>
<dbReference type="GO" id="GO:0016251">
    <property type="term" value="F:RNA polymerase II general transcription initiation factor activity"/>
    <property type="evidence" value="ECO:0007669"/>
    <property type="project" value="Ensembl"/>
</dbReference>
<dbReference type="GO" id="GO:0001675">
    <property type="term" value="P:acrosome assembly"/>
    <property type="evidence" value="ECO:0000315"/>
    <property type="project" value="MGI"/>
</dbReference>
<dbReference type="GO" id="GO:0006352">
    <property type="term" value="P:DNA-templated transcription initiation"/>
    <property type="evidence" value="ECO:0007669"/>
    <property type="project" value="InterPro"/>
</dbReference>
<dbReference type="GO" id="GO:0006235">
    <property type="term" value="P:dTTP biosynthetic process"/>
    <property type="evidence" value="ECO:0000315"/>
    <property type="project" value="MGI"/>
</dbReference>
<dbReference type="GO" id="GO:0007289">
    <property type="term" value="P:spermatid nucleus differentiation"/>
    <property type="evidence" value="ECO:0000315"/>
    <property type="project" value="MGI"/>
</dbReference>
<dbReference type="GO" id="GO:0007283">
    <property type="term" value="P:spermatogenesis"/>
    <property type="evidence" value="ECO:0000314"/>
    <property type="project" value="MGI"/>
</dbReference>
<dbReference type="CDD" id="cd04517">
    <property type="entry name" value="TLF"/>
    <property type="match status" value="1"/>
</dbReference>
<dbReference type="FunFam" id="3.30.310.10:FF:000005">
    <property type="entry name" value="TATA box-binding protein-like 1"/>
    <property type="match status" value="1"/>
</dbReference>
<dbReference type="FunFam" id="3.30.310.10:FF:000009">
    <property type="entry name" value="TatA box-binding protein-like protein 1"/>
    <property type="match status" value="1"/>
</dbReference>
<dbReference type="Gene3D" id="3.30.310.10">
    <property type="entry name" value="TATA-Binding Protein"/>
    <property type="match status" value="2"/>
</dbReference>
<dbReference type="InterPro" id="IPR000814">
    <property type="entry name" value="TBP"/>
</dbReference>
<dbReference type="InterPro" id="IPR015445">
    <property type="entry name" value="TBP-like"/>
</dbReference>
<dbReference type="InterPro" id="IPR012295">
    <property type="entry name" value="TBP_dom_sf"/>
</dbReference>
<dbReference type="PANTHER" id="PTHR10126">
    <property type="entry name" value="TATA-BOX BINDING PROTEIN"/>
    <property type="match status" value="1"/>
</dbReference>
<dbReference type="Pfam" id="PF00352">
    <property type="entry name" value="TBP"/>
    <property type="match status" value="2"/>
</dbReference>
<dbReference type="PRINTS" id="PR00686">
    <property type="entry name" value="TIFACTORIID"/>
</dbReference>
<dbReference type="SUPFAM" id="SSF55945">
    <property type="entry name" value="TATA-box binding protein-like"/>
    <property type="match status" value="2"/>
</dbReference>
<name>TBPL1_MOUSE</name>
<evidence type="ECO:0000250" key="1"/>
<evidence type="ECO:0000269" key="2">
    <source>
    </source>
</evidence>
<evidence type="ECO:0000269" key="3">
    <source>
    </source>
</evidence>
<evidence type="ECO:0000269" key="4">
    <source>
    </source>
</evidence>
<evidence type="ECO:0000305" key="5"/>
<comment type="function">
    <text evidence="1 2 4">Part of a specialized transcription system that mediates the transcription of most ribosomal proteins through the 5'-TCT-3' motif which is a core promoter element at these genes (By similarity). Seems to also mediate the transcription of NF1. Does not bind the TATA box.</text>
</comment>
<comment type="subunit">
    <text evidence="1">Binds TFIIA and TFIIB.</text>
</comment>
<comment type="subcellular location">
    <subcellularLocation>
        <location evidence="1">Cytoplasm</location>
    </subcellularLocation>
    <subcellularLocation>
        <location evidence="1">Nucleus</location>
    </subcellularLocation>
</comment>
<comment type="tissue specificity">
    <text evidence="3 4">Ubiquitously expressed.</text>
</comment>
<comment type="disruption phenotype">
    <text evidence="2">Significantly reduced NF1 levels.</text>
</comment>
<comment type="similarity">
    <text evidence="5">Belongs to the TBP family.</text>
</comment>
<keyword id="KW-0963">Cytoplasm</keyword>
<keyword id="KW-0238">DNA-binding</keyword>
<keyword id="KW-0539">Nucleus</keyword>
<keyword id="KW-1185">Reference proteome</keyword>
<keyword id="KW-0804">Transcription</keyword>
<keyword id="KW-0805">Transcription regulation</keyword>
<accession>P62340</accession>
<accession>O95753</accession>
<accession>Q9Z2Z0</accession>
<gene>
    <name type="primary">Tbpl1</name>
    <name type="synonym">Tlf</name>
    <name type="synonym">Tlp</name>
    <name type="synonym">Tlp21</name>
    <name type="synonym">Trf2</name>
    <name type="synonym">Trp</name>
</gene>